<gene>
    <name evidence="1" type="primary">recR</name>
    <name type="ordered locus">BSUIS_A0034</name>
</gene>
<accession>B0CI52</accession>
<reference key="1">
    <citation type="submission" date="2007-12" db="EMBL/GenBank/DDBJ databases">
        <title>Brucella suis ATCC 23445 whole genome shotgun sequencing project.</title>
        <authorList>
            <person name="Setubal J.C."/>
            <person name="Bowns C."/>
            <person name="Boyle S."/>
            <person name="Crasta O.R."/>
            <person name="Czar M.J."/>
            <person name="Dharmanolla C."/>
            <person name="Gillespie J.J."/>
            <person name="Kenyon R.W."/>
            <person name="Lu J."/>
            <person name="Mane S."/>
            <person name="Mohapatra S."/>
            <person name="Nagrani S."/>
            <person name="Purkayastha A."/>
            <person name="Rajasimha H.K."/>
            <person name="Shallom J.M."/>
            <person name="Shallom S."/>
            <person name="Shukla M."/>
            <person name="Snyder E.E."/>
            <person name="Sobral B.W."/>
            <person name="Wattam A.R."/>
            <person name="Will R."/>
            <person name="Williams K."/>
            <person name="Yoo H."/>
            <person name="Bruce D."/>
            <person name="Detter C."/>
            <person name="Munk C."/>
            <person name="Brettin T.S."/>
        </authorList>
    </citation>
    <scope>NUCLEOTIDE SEQUENCE [LARGE SCALE GENOMIC DNA]</scope>
    <source>
        <strain>ATCC 23445 / NCTC 10510</strain>
    </source>
</reference>
<sequence>MSKRIAGPEIERLIQLLARVPGLGPRSARRAALHLIKKKEALLVPLGGAMQEAAEKVRICSCCGNVDTSDPCTICTDERRDPATLIVVEDVSDLWALERAGTMNVRYHVLGGRLSPLDGIGPDDLNIKGLVERVASGAIKEVILAVNATVEGQTTAHYITDQLSNFDVRVTRLAHGVPVGGELDYLDEGTLAAALRARTTL</sequence>
<evidence type="ECO:0000255" key="1">
    <source>
        <dbReference type="HAMAP-Rule" id="MF_00017"/>
    </source>
</evidence>
<name>RECR_BRUSI</name>
<feature type="chain" id="PRO_1000074113" description="Recombination protein RecR">
    <location>
        <begin position="1"/>
        <end position="201"/>
    </location>
</feature>
<feature type="domain" description="Toprim" evidence="1">
    <location>
        <begin position="83"/>
        <end position="178"/>
    </location>
</feature>
<feature type="zinc finger region" description="C4-type" evidence="1">
    <location>
        <begin position="60"/>
        <end position="75"/>
    </location>
</feature>
<organism>
    <name type="scientific">Brucella suis (strain ATCC 23445 / NCTC 10510)</name>
    <dbReference type="NCBI Taxonomy" id="470137"/>
    <lineage>
        <taxon>Bacteria</taxon>
        <taxon>Pseudomonadati</taxon>
        <taxon>Pseudomonadota</taxon>
        <taxon>Alphaproteobacteria</taxon>
        <taxon>Hyphomicrobiales</taxon>
        <taxon>Brucellaceae</taxon>
        <taxon>Brucella/Ochrobactrum group</taxon>
        <taxon>Brucella</taxon>
    </lineage>
</organism>
<dbReference type="EMBL" id="CP000911">
    <property type="protein sequence ID" value="ABY37142.1"/>
    <property type="molecule type" value="Genomic_DNA"/>
</dbReference>
<dbReference type="RefSeq" id="WP_002965279.1">
    <property type="nucleotide sequence ID" value="NC_010169.1"/>
</dbReference>
<dbReference type="SMR" id="B0CI52"/>
<dbReference type="GeneID" id="97534533"/>
<dbReference type="KEGG" id="bmt:BSUIS_A0034"/>
<dbReference type="HOGENOM" id="CLU_060739_1_1_5"/>
<dbReference type="Proteomes" id="UP000008545">
    <property type="component" value="Chromosome I"/>
</dbReference>
<dbReference type="GO" id="GO:0003677">
    <property type="term" value="F:DNA binding"/>
    <property type="evidence" value="ECO:0007669"/>
    <property type="project" value="UniProtKB-UniRule"/>
</dbReference>
<dbReference type="GO" id="GO:0008270">
    <property type="term" value="F:zinc ion binding"/>
    <property type="evidence" value="ECO:0007669"/>
    <property type="project" value="UniProtKB-KW"/>
</dbReference>
<dbReference type="GO" id="GO:0006310">
    <property type="term" value="P:DNA recombination"/>
    <property type="evidence" value="ECO:0007669"/>
    <property type="project" value="UniProtKB-UniRule"/>
</dbReference>
<dbReference type="GO" id="GO:0006281">
    <property type="term" value="P:DNA repair"/>
    <property type="evidence" value="ECO:0007669"/>
    <property type="project" value="UniProtKB-UniRule"/>
</dbReference>
<dbReference type="CDD" id="cd01025">
    <property type="entry name" value="TOPRIM_recR"/>
    <property type="match status" value="1"/>
</dbReference>
<dbReference type="Gene3D" id="3.40.1360.10">
    <property type="match status" value="1"/>
</dbReference>
<dbReference type="Gene3D" id="6.10.250.240">
    <property type="match status" value="1"/>
</dbReference>
<dbReference type="Gene3D" id="1.10.8.420">
    <property type="entry name" value="RecR Domain 1"/>
    <property type="match status" value="1"/>
</dbReference>
<dbReference type="HAMAP" id="MF_00017">
    <property type="entry name" value="RecR"/>
    <property type="match status" value="1"/>
</dbReference>
<dbReference type="InterPro" id="IPR000093">
    <property type="entry name" value="DNA_Rcmb_RecR"/>
</dbReference>
<dbReference type="InterPro" id="IPR023627">
    <property type="entry name" value="Rcmb_RecR"/>
</dbReference>
<dbReference type="InterPro" id="IPR015967">
    <property type="entry name" value="Rcmb_RecR_Znf"/>
</dbReference>
<dbReference type="InterPro" id="IPR006171">
    <property type="entry name" value="TOPRIM_dom"/>
</dbReference>
<dbReference type="InterPro" id="IPR034137">
    <property type="entry name" value="TOPRIM_RecR"/>
</dbReference>
<dbReference type="NCBIfam" id="TIGR00615">
    <property type="entry name" value="recR"/>
    <property type="match status" value="1"/>
</dbReference>
<dbReference type="PANTHER" id="PTHR30446">
    <property type="entry name" value="RECOMBINATION PROTEIN RECR"/>
    <property type="match status" value="1"/>
</dbReference>
<dbReference type="PANTHER" id="PTHR30446:SF0">
    <property type="entry name" value="RECOMBINATION PROTEIN RECR"/>
    <property type="match status" value="1"/>
</dbReference>
<dbReference type="Pfam" id="PF21175">
    <property type="entry name" value="RecR_C"/>
    <property type="match status" value="1"/>
</dbReference>
<dbReference type="Pfam" id="PF21176">
    <property type="entry name" value="RecR_HhH"/>
    <property type="match status" value="1"/>
</dbReference>
<dbReference type="Pfam" id="PF02132">
    <property type="entry name" value="RecR_ZnF"/>
    <property type="match status" value="1"/>
</dbReference>
<dbReference type="Pfam" id="PF13662">
    <property type="entry name" value="Toprim_4"/>
    <property type="match status" value="1"/>
</dbReference>
<dbReference type="SMART" id="SM00493">
    <property type="entry name" value="TOPRIM"/>
    <property type="match status" value="1"/>
</dbReference>
<dbReference type="SUPFAM" id="SSF111304">
    <property type="entry name" value="Recombination protein RecR"/>
    <property type="match status" value="1"/>
</dbReference>
<dbReference type="PROSITE" id="PS01300">
    <property type="entry name" value="RECR"/>
    <property type="match status" value="1"/>
</dbReference>
<dbReference type="PROSITE" id="PS50880">
    <property type="entry name" value="TOPRIM"/>
    <property type="match status" value="1"/>
</dbReference>
<comment type="function">
    <text evidence="1">May play a role in DNA repair. It seems to be involved in an RecBC-independent recombinational process of DNA repair. It may act with RecF and RecO.</text>
</comment>
<comment type="similarity">
    <text evidence="1">Belongs to the RecR family.</text>
</comment>
<keyword id="KW-0227">DNA damage</keyword>
<keyword id="KW-0233">DNA recombination</keyword>
<keyword id="KW-0234">DNA repair</keyword>
<keyword id="KW-0479">Metal-binding</keyword>
<keyword id="KW-0862">Zinc</keyword>
<keyword id="KW-0863">Zinc-finger</keyword>
<proteinExistence type="inferred from homology"/>
<protein>
    <recommendedName>
        <fullName evidence="1">Recombination protein RecR</fullName>
    </recommendedName>
</protein>